<reference key="1">
    <citation type="journal article" date="1994" name="Infect. Immun.">
        <title>Mouse Paneth cell defensins: primary structures and antibacterial activities of numerous cryptdin isoforms.</title>
        <authorList>
            <person name="Ouellette A.J."/>
            <person name="Hsieh M.M."/>
            <person name="Nosek M.T."/>
            <person name="Cano-Gauci D.F."/>
            <person name="Huttner K.M."/>
            <person name="Buick R.N."/>
            <person name="Selsted M.E."/>
        </authorList>
    </citation>
    <scope>NUCLEOTIDE SEQUENCE [MRNA]</scope>
    <source>
        <strain>CD-1</strain>
        <tissue>Intestinal crypt</tissue>
    </source>
</reference>
<reference key="2">
    <citation type="journal article" date="1994" name="Genomics">
        <title>Structure and diversity of the murine cryptdin gene family.</title>
        <authorList>
            <person name="Huttner K.M."/>
            <person name="Selsted M.E."/>
            <person name="Ouellette A.J."/>
        </authorList>
    </citation>
    <scope>NUCLEOTIDE SEQUENCE [MRNA] OF 51-85</scope>
    <source>
        <strain>129/SvJ</strain>
        <strain>C3H/HeJ</strain>
        <tissue>Small intestine</tissue>
    </source>
</reference>
<dbReference type="EMBL" id="U03062">
    <property type="protein sequence ID" value="AAA57179.1"/>
    <property type="molecule type" value="mRNA"/>
</dbReference>
<dbReference type="PIR" id="I48894">
    <property type="entry name" value="I48894"/>
</dbReference>
<dbReference type="SMR" id="P50709"/>
<dbReference type="FunCoup" id="P50709">
    <property type="interactions" value="42"/>
</dbReference>
<dbReference type="AGR" id="MGI:99590"/>
<dbReference type="MGI" id="MGI:99590">
    <property type="gene designation" value="Defa11"/>
</dbReference>
<dbReference type="InParanoid" id="P50709"/>
<dbReference type="Proteomes" id="UP000000589">
    <property type="component" value="Unplaced"/>
</dbReference>
<dbReference type="RNAct" id="P50709">
    <property type="molecule type" value="protein"/>
</dbReference>
<dbReference type="GO" id="GO:0005615">
    <property type="term" value="C:extracellular space"/>
    <property type="evidence" value="ECO:0007669"/>
    <property type="project" value="InterPro"/>
</dbReference>
<dbReference type="GO" id="GO:0042742">
    <property type="term" value="P:defense response to bacterium"/>
    <property type="evidence" value="ECO:0007669"/>
    <property type="project" value="UniProtKB-KW"/>
</dbReference>
<dbReference type="InterPro" id="IPR016327">
    <property type="entry name" value="Alpha-defensin"/>
</dbReference>
<dbReference type="InterPro" id="IPR006081">
    <property type="entry name" value="Alpha-defensin_C"/>
</dbReference>
<dbReference type="InterPro" id="IPR002366">
    <property type="entry name" value="Alpha-defensin_N"/>
</dbReference>
<dbReference type="InterPro" id="IPR006080">
    <property type="entry name" value="Beta/alpha-defensin_C"/>
</dbReference>
<dbReference type="PANTHER" id="PTHR11876">
    <property type="entry name" value="ALPHA-DEFENSIN 1"/>
    <property type="match status" value="1"/>
</dbReference>
<dbReference type="PANTHER" id="PTHR11876:SF2">
    <property type="entry name" value="ALPHA-DEFENSIN 1-RELATED"/>
    <property type="match status" value="1"/>
</dbReference>
<dbReference type="Pfam" id="PF00323">
    <property type="entry name" value="Defensin_1"/>
    <property type="match status" value="1"/>
</dbReference>
<dbReference type="Pfam" id="PF00879">
    <property type="entry name" value="Defensin_propep"/>
    <property type="match status" value="1"/>
</dbReference>
<dbReference type="PIRSF" id="PIRSF001875">
    <property type="entry name" value="Alpha-defensin"/>
    <property type="match status" value="1"/>
</dbReference>
<dbReference type="SMART" id="SM01418">
    <property type="entry name" value="Defensin_propep"/>
    <property type="match status" value="1"/>
</dbReference>
<dbReference type="SMART" id="SM00048">
    <property type="entry name" value="DEFSN"/>
    <property type="match status" value="1"/>
</dbReference>
<dbReference type="SUPFAM" id="SSF57392">
    <property type="entry name" value="Defensin-like"/>
    <property type="match status" value="1"/>
</dbReference>
<dbReference type="PROSITE" id="PS00269">
    <property type="entry name" value="DEFENSIN"/>
    <property type="match status" value="1"/>
</dbReference>
<sequence>ALVLLAFQVQADPIQNTDEETKTEEQPGEEDQAVSVSFGDPEGTSLQEESLRDLVCYCRSRGCKGRERMNGTCRKGHLLYMLCCR</sequence>
<comment type="function">
    <text>Probably contributes to the antimicrobial barrier function of the small bowel mucosa.</text>
</comment>
<comment type="subcellular location">
    <subcellularLocation>
        <location>Secreted</location>
    </subcellularLocation>
</comment>
<comment type="tissue specificity">
    <text>Paneth cells of the small bowel.</text>
</comment>
<comment type="similarity">
    <text evidence="4">Belongs to the alpha-defensin family.</text>
</comment>
<name>DFA11_MOUSE</name>
<proteinExistence type="evidence at transcript level"/>
<evidence type="ECO:0000250" key="1"/>
<evidence type="ECO:0000255" key="2"/>
<evidence type="ECO:0000256" key="3">
    <source>
        <dbReference type="SAM" id="MobiDB-lite"/>
    </source>
</evidence>
<evidence type="ECO:0000305" key="4"/>
<protein>
    <recommendedName>
        <fullName>Alpha-defensin 11</fullName>
    </recommendedName>
    <alternativeName>
        <fullName>Defensin-related cryptdin-11</fullName>
    </alternativeName>
</protein>
<gene>
    <name type="primary">Defa11</name>
    <name type="synonym">Defcr11</name>
</gene>
<feature type="signal peptide" evidence="2">
    <location>
        <begin position="1" status="less than"/>
        <end position="11"/>
    </location>
</feature>
<feature type="propeptide" id="PRO_0000006837" evidence="1">
    <location>
        <begin position="12"/>
        <end position="50"/>
    </location>
</feature>
<feature type="peptide" id="PRO_0000006838" description="Alpha-defensin 11">
    <location>
        <begin position="51"/>
        <end position="85"/>
    </location>
</feature>
<feature type="region of interest" description="Disordered" evidence="3">
    <location>
        <begin position="14"/>
        <end position="46"/>
    </location>
</feature>
<feature type="disulfide bond" evidence="1">
    <location>
        <begin position="56"/>
        <end position="84"/>
    </location>
</feature>
<feature type="disulfide bond" evidence="1">
    <location>
        <begin position="58"/>
        <end position="73"/>
    </location>
</feature>
<feature type="disulfide bond" evidence="1">
    <location>
        <begin position="63"/>
        <end position="83"/>
    </location>
</feature>
<feature type="non-terminal residue">
    <location>
        <position position="1"/>
    </location>
</feature>
<organism>
    <name type="scientific">Mus musculus</name>
    <name type="common">Mouse</name>
    <dbReference type="NCBI Taxonomy" id="10090"/>
    <lineage>
        <taxon>Eukaryota</taxon>
        <taxon>Metazoa</taxon>
        <taxon>Chordata</taxon>
        <taxon>Craniata</taxon>
        <taxon>Vertebrata</taxon>
        <taxon>Euteleostomi</taxon>
        <taxon>Mammalia</taxon>
        <taxon>Eutheria</taxon>
        <taxon>Euarchontoglires</taxon>
        <taxon>Glires</taxon>
        <taxon>Rodentia</taxon>
        <taxon>Myomorpha</taxon>
        <taxon>Muroidea</taxon>
        <taxon>Muridae</taxon>
        <taxon>Murinae</taxon>
        <taxon>Mus</taxon>
        <taxon>Mus</taxon>
    </lineage>
</organism>
<accession>P50709</accession>
<keyword id="KW-0044">Antibiotic</keyword>
<keyword id="KW-0929">Antimicrobial</keyword>
<keyword id="KW-0211">Defensin</keyword>
<keyword id="KW-1015">Disulfide bond</keyword>
<keyword id="KW-1185">Reference proteome</keyword>
<keyword id="KW-0964">Secreted</keyword>
<keyword id="KW-0732">Signal</keyword>